<sequence length="571" mass="60647">MTRISRSAYAEIYGPTVVGGVGDRVRLADTLLLAEVEKDHTIFGEEVKFGGGKVIRDGMGQSQRLATDCVDTVITNALIIDAVTGIVKADIGIKDGLISGIGKAGNPDTQPGVTIIIGASTEVVAGEGLIVTAGAIDTHIHFICPQQIEEALATGTTTMIGGGTGPATGSLATTSTSGPWHMAAMLQALDTFPVNVGLFGKGSSSSHGALLEQVRAGAMGLKIHEDWASTPASIDTCLNVAEETDIQVAIHSDTLNESGFVEDTFAAFKGRTIHSFHTEGAGGGHAPDIIRAAGMPNVLPASTNPTMPFTRNTIDEHLDMVMVCHHLDPSIAEDLAFAESRIRRETIAAEDILHDLGAFSIMSSDSQAMGRVGEIVLRTWQTAHKMKLQRGPLQGDSERSDNERIKRYIAKYTINPAVAHGIAHLVGSVEVGKLADLVLWKPAFFGVKVNMVLKSGMAVSASIGDMGASISTPQPVQIRPMWGSHGKALRTSVAFVSQVSLSNPAVSELGLNKRLEAVRGCRGVTKHDMVRNNWLPAISVDPQTYQVYADGQLLRCEALAELPMAQRYFLF</sequence>
<feature type="chain" id="PRO_0000067539" description="Urease subunit alpha">
    <location>
        <begin position="1"/>
        <end position="571"/>
    </location>
</feature>
<feature type="domain" description="Urease" evidence="1">
    <location>
        <begin position="134"/>
        <end position="571"/>
    </location>
</feature>
<feature type="active site" description="Proton donor" evidence="1">
    <location>
        <position position="325"/>
    </location>
</feature>
<feature type="binding site" evidence="1">
    <location>
        <position position="139"/>
    </location>
    <ligand>
        <name>Ni(2+)</name>
        <dbReference type="ChEBI" id="CHEBI:49786"/>
        <label>1</label>
    </ligand>
</feature>
<feature type="binding site" evidence="1">
    <location>
        <position position="141"/>
    </location>
    <ligand>
        <name>Ni(2+)</name>
        <dbReference type="ChEBI" id="CHEBI:49786"/>
        <label>1</label>
    </ligand>
</feature>
<feature type="binding site" description="via carbamate group" evidence="1">
    <location>
        <position position="222"/>
    </location>
    <ligand>
        <name>Ni(2+)</name>
        <dbReference type="ChEBI" id="CHEBI:49786"/>
        <label>1</label>
    </ligand>
</feature>
<feature type="binding site" description="via carbamate group" evidence="1">
    <location>
        <position position="222"/>
    </location>
    <ligand>
        <name>Ni(2+)</name>
        <dbReference type="ChEBI" id="CHEBI:49786"/>
        <label>2</label>
    </ligand>
</feature>
<feature type="binding site" evidence="1">
    <location>
        <position position="224"/>
    </location>
    <ligand>
        <name>substrate</name>
    </ligand>
</feature>
<feature type="binding site" evidence="1">
    <location>
        <position position="251"/>
    </location>
    <ligand>
        <name>Ni(2+)</name>
        <dbReference type="ChEBI" id="CHEBI:49786"/>
        <label>2</label>
    </ligand>
</feature>
<feature type="binding site" evidence="1">
    <location>
        <position position="277"/>
    </location>
    <ligand>
        <name>Ni(2+)</name>
        <dbReference type="ChEBI" id="CHEBI:49786"/>
        <label>2</label>
    </ligand>
</feature>
<feature type="binding site" evidence="1">
    <location>
        <position position="365"/>
    </location>
    <ligand>
        <name>Ni(2+)</name>
        <dbReference type="ChEBI" id="CHEBI:49786"/>
        <label>1</label>
    </ligand>
</feature>
<feature type="modified residue" description="N6-carboxylysine" evidence="1">
    <location>
        <position position="222"/>
    </location>
</feature>
<feature type="sequence conflict" description="In Ref. 1; AAC46128." evidence="2" ref="1">
    <original>T</original>
    <variation>A</variation>
    <location>
        <position position="191"/>
    </location>
</feature>
<feature type="sequence conflict" description="In Ref. 1; AAC46128." evidence="2" ref="1">
    <original>R</original>
    <variation>K</variation>
    <location>
        <position position="555"/>
    </location>
</feature>
<reference key="1">
    <citation type="journal article" date="1998" name="Gene">
        <title>Characterisation of the urease gene cluster in Bordetella bronchiseptica.</title>
        <authorList>
            <person name="McMillan D.J."/>
            <person name="Mau M."/>
            <person name="Walker M.J."/>
        </authorList>
    </citation>
    <scope>NUCLEOTIDE SEQUENCE [GENOMIC DNA]</scope>
    <source>
        <strain>BB7866</strain>
    </source>
</reference>
<reference key="2">
    <citation type="journal article" date="2003" name="Nat. Genet.">
        <title>Comparative analysis of the genome sequences of Bordetella pertussis, Bordetella parapertussis and Bordetella bronchiseptica.</title>
        <authorList>
            <person name="Parkhill J."/>
            <person name="Sebaihia M."/>
            <person name="Preston A."/>
            <person name="Murphy L.D."/>
            <person name="Thomson N.R."/>
            <person name="Harris D.E."/>
            <person name="Holden M.T.G."/>
            <person name="Churcher C.M."/>
            <person name="Bentley S.D."/>
            <person name="Mungall K.L."/>
            <person name="Cerdeno-Tarraga A.-M."/>
            <person name="Temple L."/>
            <person name="James K.D."/>
            <person name="Harris B."/>
            <person name="Quail M.A."/>
            <person name="Achtman M."/>
            <person name="Atkin R."/>
            <person name="Baker S."/>
            <person name="Basham D."/>
            <person name="Bason N."/>
            <person name="Cherevach I."/>
            <person name="Chillingworth T."/>
            <person name="Collins M."/>
            <person name="Cronin A."/>
            <person name="Davis P."/>
            <person name="Doggett J."/>
            <person name="Feltwell T."/>
            <person name="Goble A."/>
            <person name="Hamlin N."/>
            <person name="Hauser H."/>
            <person name="Holroyd S."/>
            <person name="Jagels K."/>
            <person name="Leather S."/>
            <person name="Moule S."/>
            <person name="Norberczak H."/>
            <person name="O'Neil S."/>
            <person name="Ormond D."/>
            <person name="Price C."/>
            <person name="Rabbinowitsch E."/>
            <person name="Rutter S."/>
            <person name="Sanders M."/>
            <person name="Saunders D."/>
            <person name="Seeger K."/>
            <person name="Sharp S."/>
            <person name="Simmonds M."/>
            <person name="Skelton J."/>
            <person name="Squares R."/>
            <person name="Squares S."/>
            <person name="Stevens K."/>
            <person name="Unwin L."/>
            <person name="Whitehead S."/>
            <person name="Barrell B.G."/>
            <person name="Maskell D.J."/>
        </authorList>
    </citation>
    <scope>NUCLEOTIDE SEQUENCE [LARGE SCALE GENOMIC DNA]</scope>
    <source>
        <strain>ATCC BAA-588 / NCTC 13252 / RB50</strain>
    </source>
</reference>
<accession>O08400</accession>
<evidence type="ECO:0000255" key="1">
    <source>
        <dbReference type="HAMAP-Rule" id="MF_01953"/>
    </source>
</evidence>
<evidence type="ECO:0000305" key="2"/>
<comment type="catalytic activity">
    <reaction evidence="1">
        <text>urea + 2 H2O + H(+) = hydrogencarbonate + 2 NH4(+)</text>
        <dbReference type="Rhea" id="RHEA:20557"/>
        <dbReference type="ChEBI" id="CHEBI:15377"/>
        <dbReference type="ChEBI" id="CHEBI:15378"/>
        <dbReference type="ChEBI" id="CHEBI:16199"/>
        <dbReference type="ChEBI" id="CHEBI:17544"/>
        <dbReference type="ChEBI" id="CHEBI:28938"/>
        <dbReference type="EC" id="3.5.1.5"/>
    </reaction>
</comment>
<comment type="cofactor">
    <cofactor evidence="1">
        <name>Ni cation</name>
        <dbReference type="ChEBI" id="CHEBI:25516"/>
    </cofactor>
    <text evidence="1">Binds 2 nickel ions per subunit.</text>
</comment>
<comment type="pathway">
    <text evidence="1">Nitrogen metabolism; urea degradation; CO(2) and NH(3) from urea (urease route): step 1/1.</text>
</comment>
<comment type="subunit">
    <text evidence="1">Heterotrimer of UreA (gamma), UreB (beta) and UreC (alpha) subunits. Three heterotrimers associate to form the active enzyme.</text>
</comment>
<comment type="subcellular location">
    <subcellularLocation>
        <location evidence="1">Cytoplasm</location>
    </subcellularLocation>
</comment>
<comment type="PTM">
    <text evidence="1">Carboxylation allows a single lysine to coordinate two nickel ions.</text>
</comment>
<comment type="similarity">
    <text evidence="1">Belongs to the metallo-dependent hydrolases superfamily. Urease alpha subunit family.</text>
</comment>
<protein>
    <recommendedName>
        <fullName evidence="1">Urease subunit alpha</fullName>
        <ecNumber evidence="1">3.5.1.5</ecNumber>
    </recommendedName>
    <alternativeName>
        <fullName evidence="1">Urea amidohydrolase subunit alpha</fullName>
    </alternativeName>
</protein>
<proteinExistence type="inferred from homology"/>
<dbReference type="EC" id="3.5.1.5" evidence="1"/>
<dbReference type="EMBL" id="AF000579">
    <property type="protein sequence ID" value="AAC46128.1"/>
    <property type="molecule type" value="Genomic_DNA"/>
</dbReference>
<dbReference type="EMBL" id="BX640450">
    <property type="protein sequence ID" value="CAE34686.1"/>
    <property type="molecule type" value="Genomic_DNA"/>
</dbReference>
<dbReference type="RefSeq" id="WP_010927100.1">
    <property type="nucleotide sequence ID" value="NC_002927.3"/>
</dbReference>
<dbReference type="SMR" id="O08400"/>
<dbReference type="MEROPS" id="M38.982"/>
<dbReference type="GeneID" id="56477178"/>
<dbReference type="KEGG" id="bbr:BB4323"/>
<dbReference type="eggNOG" id="COG0804">
    <property type="taxonomic scope" value="Bacteria"/>
</dbReference>
<dbReference type="HOGENOM" id="CLU_000980_0_0_4"/>
<dbReference type="UniPathway" id="UPA00258">
    <property type="reaction ID" value="UER00370"/>
</dbReference>
<dbReference type="Proteomes" id="UP000001027">
    <property type="component" value="Chromosome"/>
</dbReference>
<dbReference type="GO" id="GO:0005737">
    <property type="term" value="C:cytoplasm"/>
    <property type="evidence" value="ECO:0007669"/>
    <property type="project" value="UniProtKB-SubCell"/>
</dbReference>
<dbReference type="GO" id="GO:0016151">
    <property type="term" value="F:nickel cation binding"/>
    <property type="evidence" value="ECO:0007669"/>
    <property type="project" value="UniProtKB-UniRule"/>
</dbReference>
<dbReference type="GO" id="GO:0009039">
    <property type="term" value="F:urease activity"/>
    <property type="evidence" value="ECO:0007669"/>
    <property type="project" value="UniProtKB-UniRule"/>
</dbReference>
<dbReference type="GO" id="GO:0043419">
    <property type="term" value="P:urea catabolic process"/>
    <property type="evidence" value="ECO:0007669"/>
    <property type="project" value="UniProtKB-UniRule"/>
</dbReference>
<dbReference type="CDD" id="cd00375">
    <property type="entry name" value="Urease_alpha"/>
    <property type="match status" value="1"/>
</dbReference>
<dbReference type="Gene3D" id="3.20.20.140">
    <property type="entry name" value="Metal-dependent hydrolases"/>
    <property type="match status" value="1"/>
</dbReference>
<dbReference type="Gene3D" id="2.30.40.10">
    <property type="entry name" value="Urease, subunit C, domain 1"/>
    <property type="match status" value="1"/>
</dbReference>
<dbReference type="HAMAP" id="MF_01953">
    <property type="entry name" value="Urease_alpha"/>
    <property type="match status" value="1"/>
</dbReference>
<dbReference type="InterPro" id="IPR006680">
    <property type="entry name" value="Amidohydro-rel"/>
</dbReference>
<dbReference type="InterPro" id="IPR011059">
    <property type="entry name" value="Metal-dep_hydrolase_composite"/>
</dbReference>
<dbReference type="InterPro" id="IPR032466">
    <property type="entry name" value="Metal_Hydrolase"/>
</dbReference>
<dbReference type="InterPro" id="IPR011612">
    <property type="entry name" value="Urease_alpha_N_dom"/>
</dbReference>
<dbReference type="InterPro" id="IPR050112">
    <property type="entry name" value="Urease_alpha_subunit"/>
</dbReference>
<dbReference type="InterPro" id="IPR017950">
    <property type="entry name" value="Urease_AS"/>
</dbReference>
<dbReference type="InterPro" id="IPR005848">
    <property type="entry name" value="Urease_asu"/>
</dbReference>
<dbReference type="InterPro" id="IPR017951">
    <property type="entry name" value="Urease_asu_c"/>
</dbReference>
<dbReference type="InterPro" id="IPR029754">
    <property type="entry name" value="Urease_Ni-bd"/>
</dbReference>
<dbReference type="NCBIfam" id="NF009686">
    <property type="entry name" value="PRK13207.1"/>
    <property type="match status" value="1"/>
</dbReference>
<dbReference type="NCBIfam" id="TIGR01792">
    <property type="entry name" value="urease_alph"/>
    <property type="match status" value="1"/>
</dbReference>
<dbReference type="PANTHER" id="PTHR43440">
    <property type="entry name" value="UREASE"/>
    <property type="match status" value="1"/>
</dbReference>
<dbReference type="PANTHER" id="PTHR43440:SF1">
    <property type="entry name" value="UREASE"/>
    <property type="match status" value="1"/>
</dbReference>
<dbReference type="Pfam" id="PF01979">
    <property type="entry name" value="Amidohydro_1"/>
    <property type="match status" value="1"/>
</dbReference>
<dbReference type="Pfam" id="PF00449">
    <property type="entry name" value="Urease_alpha"/>
    <property type="match status" value="1"/>
</dbReference>
<dbReference type="PRINTS" id="PR01752">
    <property type="entry name" value="UREASE"/>
</dbReference>
<dbReference type="SUPFAM" id="SSF51338">
    <property type="entry name" value="Composite domain of metallo-dependent hydrolases"/>
    <property type="match status" value="1"/>
</dbReference>
<dbReference type="SUPFAM" id="SSF51556">
    <property type="entry name" value="Metallo-dependent hydrolases"/>
    <property type="match status" value="1"/>
</dbReference>
<dbReference type="PROSITE" id="PS01120">
    <property type="entry name" value="UREASE_1"/>
    <property type="match status" value="1"/>
</dbReference>
<dbReference type="PROSITE" id="PS00145">
    <property type="entry name" value="UREASE_2"/>
    <property type="match status" value="1"/>
</dbReference>
<dbReference type="PROSITE" id="PS51368">
    <property type="entry name" value="UREASE_3"/>
    <property type="match status" value="1"/>
</dbReference>
<gene>
    <name evidence="1" type="primary">ureC</name>
    <name type="ordered locus">BB4323</name>
</gene>
<name>URE1_BORBR</name>
<organism>
    <name type="scientific">Bordetella bronchiseptica (strain ATCC BAA-588 / NCTC 13252 / RB50)</name>
    <name type="common">Alcaligenes bronchisepticus</name>
    <dbReference type="NCBI Taxonomy" id="257310"/>
    <lineage>
        <taxon>Bacteria</taxon>
        <taxon>Pseudomonadati</taxon>
        <taxon>Pseudomonadota</taxon>
        <taxon>Betaproteobacteria</taxon>
        <taxon>Burkholderiales</taxon>
        <taxon>Alcaligenaceae</taxon>
        <taxon>Bordetella</taxon>
    </lineage>
</organism>
<keyword id="KW-0963">Cytoplasm</keyword>
<keyword id="KW-0378">Hydrolase</keyword>
<keyword id="KW-0479">Metal-binding</keyword>
<keyword id="KW-0533">Nickel</keyword>